<dbReference type="EC" id="2.7.11.1"/>
<dbReference type="EMBL" id="AC104280">
    <property type="protein sequence ID" value="AAU90191.1"/>
    <property type="molecule type" value="Genomic_DNA"/>
</dbReference>
<dbReference type="EMBL" id="AP008211">
    <property type="protein sequence ID" value="BAF16819.1"/>
    <property type="molecule type" value="Genomic_DNA"/>
</dbReference>
<dbReference type="EMBL" id="AP014961">
    <property type="protein sequence ID" value="BAS92772.1"/>
    <property type="molecule type" value="Genomic_DNA"/>
</dbReference>
<dbReference type="EMBL" id="CM000142">
    <property type="protein sequence ID" value="EAZ33256.1"/>
    <property type="molecule type" value="Genomic_DNA"/>
</dbReference>
<dbReference type="EMBL" id="CM000142">
    <property type="protein sequence ID" value="EEE62709.1"/>
    <property type="molecule type" value="Genomic_DNA"/>
</dbReference>
<dbReference type="EMBL" id="AK107068">
    <property type="protein sequence ID" value="BAG97933.1"/>
    <property type="molecule type" value="mRNA"/>
</dbReference>
<dbReference type="RefSeq" id="XP_015639285.1">
    <property type="nucleotide sequence ID" value="XM_015783799.1"/>
</dbReference>
<dbReference type="SMR" id="Q60EY8"/>
<dbReference type="FunCoup" id="Q60EY8">
    <property type="interactions" value="145"/>
</dbReference>
<dbReference type="STRING" id="39947.Q60EY8"/>
<dbReference type="PaxDb" id="39947-Q60EY8"/>
<dbReference type="EnsemblPlants" id="Os05t0208100-01">
    <property type="protein sequence ID" value="Os05t0208100-01"/>
    <property type="gene ID" value="Os05g0208100"/>
</dbReference>
<dbReference type="Gramene" id="Os05t0208100-01">
    <property type="protein sequence ID" value="Os05t0208100-01"/>
    <property type="gene ID" value="Os05g0208100"/>
</dbReference>
<dbReference type="KEGG" id="dosa:Os05g0208100"/>
<dbReference type="eggNOG" id="KOG0583">
    <property type="taxonomic scope" value="Eukaryota"/>
</dbReference>
<dbReference type="HOGENOM" id="CLU_000288_59_0_1"/>
<dbReference type="InParanoid" id="Q60EY8"/>
<dbReference type="OMA" id="LNDICWK"/>
<dbReference type="OrthoDB" id="10252171at2759"/>
<dbReference type="Proteomes" id="UP000000763">
    <property type="component" value="Chromosome 5"/>
</dbReference>
<dbReference type="Proteomes" id="UP000007752">
    <property type="component" value="Chromosome 5"/>
</dbReference>
<dbReference type="Proteomes" id="UP000059680">
    <property type="component" value="Chromosome 5"/>
</dbReference>
<dbReference type="GO" id="GO:0005524">
    <property type="term" value="F:ATP binding"/>
    <property type="evidence" value="ECO:0007669"/>
    <property type="project" value="UniProtKB-KW"/>
</dbReference>
<dbReference type="GO" id="GO:0106310">
    <property type="term" value="F:protein serine kinase activity"/>
    <property type="evidence" value="ECO:0007669"/>
    <property type="project" value="RHEA"/>
</dbReference>
<dbReference type="GO" id="GO:0004674">
    <property type="term" value="F:protein serine/threonine kinase activity"/>
    <property type="evidence" value="ECO:0000318"/>
    <property type="project" value="GO_Central"/>
</dbReference>
<dbReference type="GO" id="GO:0007165">
    <property type="term" value="P:signal transduction"/>
    <property type="evidence" value="ECO:0000318"/>
    <property type="project" value="GO_Central"/>
</dbReference>
<dbReference type="CDD" id="cd12195">
    <property type="entry name" value="CIPK_C"/>
    <property type="match status" value="1"/>
</dbReference>
<dbReference type="FunFam" id="3.30.200.20:FF:000042">
    <property type="entry name" value="Aurora kinase A"/>
    <property type="match status" value="1"/>
</dbReference>
<dbReference type="FunFam" id="1.10.510.10:FF:000303">
    <property type="entry name" value="Non-specific serine/threonine protein kinase"/>
    <property type="match status" value="1"/>
</dbReference>
<dbReference type="FunFam" id="3.30.310.80:FF:000005">
    <property type="entry name" value="Non-specific serine/threonine protein kinase"/>
    <property type="match status" value="1"/>
</dbReference>
<dbReference type="Gene3D" id="3.30.310.80">
    <property type="entry name" value="Kinase associated domain 1, KA1"/>
    <property type="match status" value="1"/>
</dbReference>
<dbReference type="Gene3D" id="3.30.200.20">
    <property type="entry name" value="Phosphorylase Kinase, domain 1"/>
    <property type="match status" value="1"/>
</dbReference>
<dbReference type="Gene3D" id="1.10.510.10">
    <property type="entry name" value="Transferase(Phosphotransferase) domain 1"/>
    <property type="match status" value="1"/>
</dbReference>
<dbReference type="InterPro" id="IPR011009">
    <property type="entry name" value="Kinase-like_dom_sf"/>
</dbReference>
<dbReference type="InterPro" id="IPR018451">
    <property type="entry name" value="NAF/FISL_domain"/>
</dbReference>
<dbReference type="InterPro" id="IPR004041">
    <property type="entry name" value="NAF_dom"/>
</dbReference>
<dbReference type="InterPro" id="IPR000719">
    <property type="entry name" value="Prot_kinase_dom"/>
</dbReference>
<dbReference type="InterPro" id="IPR017441">
    <property type="entry name" value="Protein_kinase_ATP_BS"/>
</dbReference>
<dbReference type="InterPro" id="IPR008271">
    <property type="entry name" value="Ser/Thr_kinase_AS"/>
</dbReference>
<dbReference type="PANTHER" id="PTHR43895">
    <property type="entry name" value="CALCIUM/CALMODULIN-DEPENDENT PROTEIN KINASE KINASE-RELATED"/>
    <property type="match status" value="1"/>
</dbReference>
<dbReference type="PANTHER" id="PTHR43895:SF139">
    <property type="entry name" value="CBL-INTERACTING PROTEIN KINASE 5"/>
    <property type="match status" value="1"/>
</dbReference>
<dbReference type="Pfam" id="PF03822">
    <property type="entry name" value="NAF"/>
    <property type="match status" value="1"/>
</dbReference>
<dbReference type="Pfam" id="PF00069">
    <property type="entry name" value="Pkinase"/>
    <property type="match status" value="1"/>
</dbReference>
<dbReference type="SMART" id="SM00220">
    <property type="entry name" value="S_TKc"/>
    <property type="match status" value="1"/>
</dbReference>
<dbReference type="SUPFAM" id="SSF56112">
    <property type="entry name" value="Protein kinase-like (PK-like)"/>
    <property type="match status" value="1"/>
</dbReference>
<dbReference type="PROSITE" id="PS50816">
    <property type="entry name" value="NAF"/>
    <property type="match status" value="1"/>
</dbReference>
<dbReference type="PROSITE" id="PS00107">
    <property type="entry name" value="PROTEIN_KINASE_ATP"/>
    <property type="match status" value="1"/>
</dbReference>
<dbReference type="PROSITE" id="PS50011">
    <property type="entry name" value="PROTEIN_KINASE_DOM"/>
    <property type="match status" value="1"/>
</dbReference>
<dbReference type="PROSITE" id="PS00108">
    <property type="entry name" value="PROTEIN_KINASE_ST"/>
    <property type="match status" value="1"/>
</dbReference>
<proteinExistence type="evidence at transcript level"/>
<organism>
    <name type="scientific">Oryza sativa subsp. japonica</name>
    <name type="common">Rice</name>
    <dbReference type="NCBI Taxonomy" id="39947"/>
    <lineage>
        <taxon>Eukaryota</taxon>
        <taxon>Viridiplantae</taxon>
        <taxon>Streptophyta</taxon>
        <taxon>Embryophyta</taxon>
        <taxon>Tracheophyta</taxon>
        <taxon>Spermatophyta</taxon>
        <taxon>Magnoliopsida</taxon>
        <taxon>Liliopsida</taxon>
        <taxon>Poales</taxon>
        <taxon>Poaceae</taxon>
        <taxon>BOP clade</taxon>
        <taxon>Oryzoideae</taxon>
        <taxon>Oryzeae</taxon>
        <taxon>Oryzinae</taxon>
        <taxon>Oryza</taxon>
        <taxon>Oryza sativa</taxon>
    </lineage>
</organism>
<accession>Q60EY8</accession>
<accession>B7EZY6</accession>
<sequence>MPEKGTVVMSRYELGRSLGHGTFSKVYQARSLVSGETVAVKVIDKEKALRAGAGMVDQIEREVAVMRLVGRHPNVVRLHEVMASRSKIYFVMELVRGGELLARLVAGGGRLGEDAARRYFHQLVAAVDFCHSRGVYHRDLKPENLLVDDDGSGGGGNLKVTDFGLSALSASRRHDGLLHTTCGTPSYVAPEIIGDKGYDGATADVWSCGVILFLLLAGYLPFFDSNLMEMYKKITNGEFKVPDWFTPDARSLISRLLDPNPTTRITIDELVKHPWFKKGHTKRPASSNTMKLNEEEKPANAAMNMKPASLNAFDIISLSQGFDLSGMFCCHGHSSRTQDQLFVTGKPATAIVSRLEEIAETEHFTVKKKQKKRQEEDGMAVKLQGWKEGRKGQLAIDAEIFEVSPSCYVVEVKKTAGDTLEYQAFCNRDLRPSLNDICWTSPATAASEKNQLPAVSEVSPLSSPRN</sequence>
<keyword id="KW-0067">ATP-binding</keyword>
<keyword id="KW-0418">Kinase</keyword>
<keyword id="KW-0464">Manganese</keyword>
<keyword id="KW-0547">Nucleotide-binding</keyword>
<keyword id="KW-1185">Reference proteome</keyword>
<keyword id="KW-0723">Serine/threonine-protein kinase</keyword>
<keyword id="KW-0808">Transferase</keyword>
<gene>
    <name type="primary">CIPK20</name>
    <name type="ordered locus">Os05g0208100</name>
    <name type="ordered locus">LOC_Os05g11790</name>
    <name type="ORF">OJ1430_B02.8</name>
    <name type="ORF">OsJ_016739</name>
    <name evidence="8" type="ORF">OsJ_17512</name>
</gene>
<name>CIPKK_ORYSJ</name>
<evidence type="ECO:0000250" key="1"/>
<evidence type="ECO:0000255" key="2">
    <source>
        <dbReference type="PROSITE-ProRule" id="PRU00159"/>
    </source>
</evidence>
<evidence type="ECO:0000255" key="3">
    <source>
        <dbReference type="PROSITE-ProRule" id="PRU00256"/>
    </source>
</evidence>
<evidence type="ECO:0000255" key="4">
    <source>
        <dbReference type="PROSITE-ProRule" id="PRU10027"/>
    </source>
</evidence>
<evidence type="ECO:0000256" key="5">
    <source>
        <dbReference type="SAM" id="MobiDB-lite"/>
    </source>
</evidence>
<evidence type="ECO:0000269" key="6">
    <source>
    </source>
</evidence>
<evidence type="ECO:0000305" key="7"/>
<evidence type="ECO:0000312" key="8">
    <source>
        <dbReference type="EMBL" id="EEE62709.1"/>
    </source>
</evidence>
<reference key="1">
    <citation type="journal article" date="2005" name="Mol. Genet. Genomics">
        <title>A fine physical map of the rice chromosome 5.</title>
        <authorList>
            <person name="Cheng C.-H."/>
            <person name="Chung M.C."/>
            <person name="Liu S.-M."/>
            <person name="Chen S.-K."/>
            <person name="Kao F.Y."/>
            <person name="Lin S.-J."/>
            <person name="Hsiao S.-H."/>
            <person name="Tseng I.C."/>
            <person name="Hsing Y.-I.C."/>
            <person name="Wu H.-P."/>
            <person name="Chen C.-S."/>
            <person name="Shaw J.-F."/>
            <person name="Wu J."/>
            <person name="Matsumoto T."/>
            <person name="Sasaki T."/>
            <person name="Chen H.-C."/>
            <person name="Chow T.-Y."/>
        </authorList>
    </citation>
    <scope>NUCLEOTIDE SEQUENCE [LARGE SCALE GENOMIC DNA]</scope>
    <source>
        <strain>cv. Nipponbare</strain>
    </source>
</reference>
<reference key="2">
    <citation type="journal article" date="2005" name="Nature">
        <title>The map-based sequence of the rice genome.</title>
        <authorList>
            <consortium name="International rice genome sequencing project (IRGSP)"/>
        </authorList>
    </citation>
    <scope>NUCLEOTIDE SEQUENCE [LARGE SCALE GENOMIC DNA]</scope>
    <source>
        <strain>cv. Nipponbare</strain>
    </source>
</reference>
<reference key="3">
    <citation type="journal article" date="2008" name="Nucleic Acids Res.">
        <title>The rice annotation project database (RAP-DB): 2008 update.</title>
        <authorList>
            <consortium name="The rice annotation project (RAP)"/>
        </authorList>
    </citation>
    <scope>GENOME REANNOTATION</scope>
    <source>
        <strain>cv. Nipponbare</strain>
    </source>
</reference>
<reference key="4">
    <citation type="journal article" date="2013" name="Rice">
        <title>Improvement of the Oryza sativa Nipponbare reference genome using next generation sequence and optical map data.</title>
        <authorList>
            <person name="Kawahara Y."/>
            <person name="de la Bastide M."/>
            <person name="Hamilton J.P."/>
            <person name="Kanamori H."/>
            <person name="McCombie W.R."/>
            <person name="Ouyang S."/>
            <person name="Schwartz D.C."/>
            <person name="Tanaka T."/>
            <person name="Wu J."/>
            <person name="Zhou S."/>
            <person name="Childs K.L."/>
            <person name="Davidson R.M."/>
            <person name="Lin H."/>
            <person name="Quesada-Ocampo L."/>
            <person name="Vaillancourt B."/>
            <person name="Sakai H."/>
            <person name="Lee S.S."/>
            <person name="Kim J."/>
            <person name="Numa H."/>
            <person name="Itoh T."/>
            <person name="Buell C.R."/>
            <person name="Matsumoto T."/>
        </authorList>
    </citation>
    <scope>GENOME REANNOTATION</scope>
    <source>
        <strain>cv. Nipponbare</strain>
    </source>
</reference>
<reference key="5">
    <citation type="journal article" date="2005" name="PLoS Biol.">
        <title>The genomes of Oryza sativa: a history of duplications.</title>
        <authorList>
            <person name="Yu J."/>
            <person name="Wang J."/>
            <person name="Lin W."/>
            <person name="Li S."/>
            <person name="Li H."/>
            <person name="Zhou J."/>
            <person name="Ni P."/>
            <person name="Dong W."/>
            <person name="Hu S."/>
            <person name="Zeng C."/>
            <person name="Zhang J."/>
            <person name="Zhang Y."/>
            <person name="Li R."/>
            <person name="Xu Z."/>
            <person name="Li S."/>
            <person name="Li X."/>
            <person name="Zheng H."/>
            <person name="Cong L."/>
            <person name="Lin L."/>
            <person name="Yin J."/>
            <person name="Geng J."/>
            <person name="Li G."/>
            <person name="Shi J."/>
            <person name="Liu J."/>
            <person name="Lv H."/>
            <person name="Li J."/>
            <person name="Wang J."/>
            <person name="Deng Y."/>
            <person name="Ran L."/>
            <person name="Shi X."/>
            <person name="Wang X."/>
            <person name="Wu Q."/>
            <person name="Li C."/>
            <person name="Ren X."/>
            <person name="Wang J."/>
            <person name="Wang X."/>
            <person name="Li D."/>
            <person name="Liu D."/>
            <person name="Zhang X."/>
            <person name="Ji Z."/>
            <person name="Zhao W."/>
            <person name="Sun Y."/>
            <person name="Zhang Z."/>
            <person name="Bao J."/>
            <person name="Han Y."/>
            <person name="Dong L."/>
            <person name="Ji J."/>
            <person name="Chen P."/>
            <person name="Wu S."/>
            <person name="Liu J."/>
            <person name="Xiao Y."/>
            <person name="Bu D."/>
            <person name="Tan J."/>
            <person name="Yang L."/>
            <person name="Ye C."/>
            <person name="Zhang J."/>
            <person name="Xu J."/>
            <person name="Zhou Y."/>
            <person name="Yu Y."/>
            <person name="Zhang B."/>
            <person name="Zhuang S."/>
            <person name="Wei H."/>
            <person name="Liu B."/>
            <person name="Lei M."/>
            <person name="Yu H."/>
            <person name="Li Y."/>
            <person name="Xu H."/>
            <person name="Wei S."/>
            <person name="He X."/>
            <person name="Fang L."/>
            <person name="Zhang Z."/>
            <person name="Zhang Y."/>
            <person name="Huang X."/>
            <person name="Su Z."/>
            <person name="Tong W."/>
            <person name="Li J."/>
            <person name="Tong Z."/>
            <person name="Li S."/>
            <person name="Ye J."/>
            <person name="Wang L."/>
            <person name="Fang L."/>
            <person name="Lei T."/>
            <person name="Chen C.-S."/>
            <person name="Chen H.-C."/>
            <person name="Xu Z."/>
            <person name="Li H."/>
            <person name="Huang H."/>
            <person name="Zhang F."/>
            <person name="Xu H."/>
            <person name="Li N."/>
            <person name="Zhao C."/>
            <person name="Li S."/>
            <person name="Dong L."/>
            <person name="Huang Y."/>
            <person name="Li L."/>
            <person name="Xi Y."/>
            <person name="Qi Q."/>
            <person name="Li W."/>
            <person name="Zhang B."/>
            <person name="Hu W."/>
            <person name="Zhang Y."/>
            <person name="Tian X."/>
            <person name="Jiao Y."/>
            <person name="Liang X."/>
            <person name="Jin J."/>
            <person name="Gao L."/>
            <person name="Zheng W."/>
            <person name="Hao B."/>
            <person name="Liu S.-M."/>
            <person name="Wang W."/>
            <person name="Yuan L."/>
            <person name="Cao M."/>
            <person name="McDermott J."/>
            <person name="Samudrala R."/>
            <person name="Wang J."/>
            <person name="Wong G.K.-S."/>
            <person name="Yang H."/>
        </authorList>
    </citation>
    <scope>NUCLEOTIDE SEQUENCE [LARGE SCALE GENOMIC DNA]</scope>
    <source>
        <strain>cv. Nipponbare</strain>
    </source>
</reference>
<reference key="6">
    <citation type="journal article" date="2003" name="Science">
        <title>Collection, mapping, and annotation of over 28,000 cDNA clones from japonica rice.</title>
        <authorList>
            <consortium name="The rice full-length cDNA consortium"/>
        </authorList>
    </citation>
    <scope>NUCLEOTIDE SEQUENCE [LARGE SCALE MRNA]</scope>
    <source>
        <strain>cv. Nipponbare</strain>
    </source>
</reference>
<reference key="7">
    <citation type="journal article" date="2004" name="Plant Physiol.">
        <title>Calcium sensors and their interacting protein kinases: genomics of the Arabidopsis and rice CBL-CIPK signaling networks.</title>
        <authorList>
            <person name="Kolukisaoglu U."/>
            <person name="Weinl S."/>
            <person name="Blazevic D."/>
            <person name="Batistic O."/>
            <person name="Kudla J."/>
        </authorList>
    </citation>
    <scope>GENE FAMILY</scope>
    <scope>NOMENCLATURE</scope>
</reference>
<reference key="8">
    <citation type="journal article" date="2007" name="Plant Physiol.">
        <title>Characterization of stress-responsive CIPK genes in rice for stress tolerance improvement.</title>
        <authorList>
            <person name="Xiang Y."/>
            <person name="Huang Y."/>
            <person name="Xiong L."/>
        </authorList>
    </citation>
    <scope>INDUCTION</scope>
</reference>
<protein>
    <recommendedName>
        <fullName>CBL-interacting protein kinase 20</fullName>
        <ecNumber>2.7.11.1</ecNumber>
    </recommendedName>
    <alternativeName>
        <fullName>OsCIPK20</fullName>
    </alternativeName>
</protein>
<feature type="chain" id="PRO_0000338378" description="CBL-interacting protein kinase 20">
    <location>
        <begin position="1"/>
        <end position="466"/>
    </location>
</feature>
<feature type="domain" description="Protein kinase" evidence="2">
    <location>
        <begin position="12"/>
        <end position="276"/>
    </location>
</feature>
<feature type="domain" description="NAF" evidence="3">
    <location>
        <begin position="297"/>
        <end position="329"/>
    </location>
</feature>
<feature type="region of interest" description="Activation loop" evidence="1">
    <location>
        <begin position="162"/>
        <end position="191"/>
    </location>
</feature>
<feature type="region of interest" description="PPI" evidence="1">
    <location>
        <begin position="337"/>
        <end position="366"/>
    </location>
</feature>
<feature type="region of interest" description="Disordered" evidence="5">
    <location>
        <begin position="446"/>
        <end position="466"/>
    </location>
</feature>
<feature type="active site" description="Proton acceptor" evidence="2 4">
    <location>
        <position position="139"/>
    </location>
</feature>
<feature type="binding site" evidence="2">
    <location>
        <begin position="18"/>
        <end position="26"/>
    </location>
    <ligand>
        <name>ATP</name>
        <dbReference type="ChEBI" id="CHEBI:30616"/>
    </ligand>
</feature>
<feature type="binding site" evidence="2">
    <location>
        <position position="41"/>
    </location>
    <ligand>
        <name>ATP</name>
        <dbReference type="ChEBI" id="CHEBI:30616"/>
    </ligand>
</feature>
<comment type="function">
    <text evidence="1">CIPK serine-threonine protein kinases interact with CBL proteins. Binding of a CBL protein to the regulatory NAF domain of CIPK protein lead to the activation of the kinase in a calcium-dependent manner (By similarity).</text>
</comment>
<comment type="catalytic activity">
    <reaction>
        <text>L-seryl-[protein] + ATP = O-phospho-L-seryl-[protein] + ADP + H(+)</text>
        <dbReference type="Rhea" id="RHEA:17989"/>
        <dbReference type="Rhea" id="RHEA-COMP:9863"/>
        <dbReference type="Rhea" id="RHEA-COMP:11604"/>
        <dbReference type="ChEBI" id="CHEBI:15378"/>
        <dbReference type="ChEBI" id="CHEBI:29999"/>
        <dbReference type="ChEBI" id="CHEBI:30616"/>
        <dbReference type="ChEBI" id="CHEBI:83421"/>
        <dbReference type="ChEBI" id="CHEBI:456216"/>
        <dbReference type="EC" id="2.7.11.1"/>
    </reaction>
</comment>
<comment type="catalytic activity">
    <reaction>
        <text>L-threonyl-[protein] + ATP = O-phospho-L-threonyl-[protein] + ADP + H(+)</text>
        <dbReference type="Rhea" id="RHEA:46608"/>
        <dbReference type="Rhea" id="RHEA-COMP:11060"/>
        <dbReference type="Rhea" id="RHEA-COMP:11605"/>
        <dbReference type="ChEBI" id="CHEBI:15378"/>
        <dbReference type="ChEBI" id="CHEBI:30013"/>
        <dbReference type="ChEBI" id="CHEBI:30616"/>
        <dbReference type="ChEBI" id="CHEBI:61977"/>
        <dbReference type="ChEBI" id="CHEBI:456216"/>
        <dbReference type="EC" id="2.7.11.1"/>
    </reaction>
</comment>
<comment type="cofactor">
    <cofactor evidence="1">
        <name>Mn(2+)</name>
        <dbReference type="ChEBI" id="CHEBI:29035"/>
    </cofactor>
</comment>
<comment type="induction">
    <text evidence="6">By drought stress and abscisic acid (ABA).</text>
</comment>
<comment type="domain">
    <text evidence="1">The activation loop within the kinase domain is the target of phosphorylation/activation by upstream protein kinases. The PPI motif mediates the interaction with the ABI (abscisic acid-insensitive) phosphatases (By similarity).</text>
</comment>
<comment type="similarity">
    <text evidence="7">Belongs to the protein kinase superfamily. CAMK Ser/Thr protein kinase family. SNF1 subfamily.</text>
</comment>